<proteinExistence type="inferred from homology"/>
<feature type="chain" id="PRO_0000107555" description="Acetate kinase">
    <location>
        <begin position="1"/>
        <end position="405"/>
    </location>
</feature>
<feature type="active site" description="Proton donor/acceptor" evidence="1">
    <location>
        <position position="155"/>
    </location>
</feature>
<feature type="binding site" evidence="1">
    <location>
        <position position="7"/>
    </location>
    <ligand>
        <name>Mg(2+)</name>
        <dbReference type="ChEBI" id="CHEBI:18420"/>
    </ligand>
</feature>
<feature type="binding site" evidence="1">
    <location>
        <position position="14"/>
    </location>
    <ligand>
        <name>ATP</name>
        <dbReference type="ChEBI" id="CHEBI:30616"/>
    </ligand>
</feature>
<feature type="binding site" evidence="1">
    <location>
        <position position="98"/>
    </location>
    <ligand>
        <name>substrate</name>
    </ligand>
</feature>
<feature type="binding site" evidence="1">
    <location>
        <begin position="215"/>
        <end position="219"/>
    </location>
    <ligand>
        <name>ATP</name>
        <dbReference type="ChEBI" id="CHEBI:30616"/>
    </ligand>
</feature>
<feature type="binding site" evidence="1">
    <location>
        <begin position="289"/>
        <end position="291"/>
    </location>
    <ligand>
        <name>ATP</name>
        <dbReference type="ChEBI" id="CHEBI:30616"/>
    </ligand>
</feature>
<feature type="binding site" evidence="1">
    <location>
        <begin position="337"/>
        <end position="341"/>
    </location>
    <ligand>
        <name>ATP</name>
        <dbReference type="ChEBI" id="CHEBI:30616"/>
    </ligand>
</feature>
<feature type="binding site" evidence="1">
    <location>
        <position position="391"/>
    </location>
    <ligand>
        <name>Mg(2+)</name>
        <dbReference type="ChEBI" id="CHEBI:18420"/>
    </ligand>
</feature>
<feature type="site" description="Transition state stabilizer" evidence="1">
    <location>
        <position position="187"/>
    </location>
</feature>
<feature type="site" description="Transition state stabilizer" evidence="1">
    <location>
        <position position="248"/>
    </location>
</feature>
<protein>
    <recommendedName>
        <fullName evidence="1">Acetate kinase</fullName>
        <ecNumber evidence="1">2.7.2.1</ecNumber>
    </recommendedName>
    <alternativeName>
        <fullName evidence="1">Acetokinase</fullName>
    </alternativeName>
</protein>
<sequence length="405" mass="44129">MKILIINSGSSSIKFQLIDMSDESVLASGLVERIGETDTTEKNINCTFHPGTDKKHKIEICQTVADHRQGMLAAIELLGDKEQAVMSDLSEIDAVGHRIVHGGETMYQPVVVDEKVIAEITAAIPLAPLHNPGHLDGIKVAQELFTEVPHVTVFDTAFFQTIPPHAHIYALPYELYTKHRIRRYGAHGTSHKFVTNECAKLLEKPVEECNLITVHLGNGSSMSAVEGGKAIDTSMGVTPLEGLVMGTRSGDIDPAIMAFLNRNLGMSIEEIDHMLNKESGLKGICGMNDMRDIHAAADAGNELAELAVGIQTYRIRKYIGSYMAALGQVDAIVFTAGIGENDDIVRAKSLEKLENLGVILDKKLNAQRSKEPFCISTPESKIQVWVIPTNEELAIARETKAVVNA</sequence>
<organism>
    <name type="scientific">Desulfotalea psychrophila (strain LSv54 / DSM 12343)</name>
    <dbReference type="NCBI Taxonomy" id="177439"/>
    <lineage>
        <taxon>Bacteria</taxon>
        <taxon>Pseudomonadati</taxon>
        <taxon>Thermodesulfobacteriota</taxon>
        <taxon>Desulfobulbia</taxon>
        <taxon>Desulfobulbales</taxon>
        <taxon>Desulfocapsaceae</taxon>
        <taxon>Desulfotalea</taxon>
    </lineage>
</organism>
<gene>
    <name evidence="1" type="primary">ackA</name>
    <name type="ordered locus">DP0559</name>
</gene>
<dbReference type="EC" id="2.7.2.1" evidence="1"/>
<dbReference type="EMBL" id="CR522870">
    <property type="protein sequence ID" value="CAG35288.1"/>
    <property type="molecule type" value="Genomic_DNA"/>
</dbReference>
<dbReference type="RefSeq" id="WP_011187804.1">
    <property type="nucleotide sequence ID" value="NC_006138.1"/>
</dbReference>
<dbReference type="SMR" id="Q6AQT5"/>
<dbReference type="STRING" id="177439.DP0559"/>
<dbReference type="KEGG" id="dps:DP0559"/>
<dbReference type="eggNOG" id="COG0282">
    <property type="taxonomic scope" value="Bacteria"/>
</dbReference>
<dbReference type="HOGENOM" id="CLU_020352_0_1_7"/>
<dbReference type="OrthoDB" id="9802453at2"/>
<dbReference type="UniPathway" id="UPA00340">
    <property type="reaction ID" value="UER00458"/>
</dbReference>
<dbReference type="Proteomes" id="UP000000602">
    <property type="component" value="Chromosome"/>
</dbReference>
<dbReference type="GO" id="GO:0005737">
    <property type="term" value="C:cytoplasm"/>
    <property type="evidence" value="ECO:0007669"/>
    <property type="project" value="UniProtKB-SubCell"/>
</dbReference>
<dbReference type="GO" id="GO:0008776">
    <property type="term" value="F:acetate kinase activity"/>
    <property type="evidence" value="ECO:0007669"/>
    <property type="project" value="UniProtKB-UniRule"/>
</dbReference>
<dbReference type="GO" id="GO:0005524">
    <property type="term" value="F:ATP binding"/>
    <property type="evidence" value="ECO:0007669"/>
    <property type="project" value="UniProtKB-KW"/>
</dbReference>
<dbReference type="GO" id="GO:0000287">
    <property type="term" value="F:magnesium ion binding"/>
    <property type="evidence" value="ECO:0007669"/>
    <property type="project" value="UniProtKB-UniRule"/>
</dbReference>
<dbReference type="GO" id="GO:0006083">
    <property type="term" value="P:acetate metabolic process"/>
    <property type="evidence" value="ECO:0007669"/>
    <property type="project" value="TreeGrafter"/>
</dbReference>
<dbReference type="GO" id="GO:0006085">
    <property type="term" value="P:acetyl-CoA biosynthetic process"/>
    <property type="evidence" value="ECO:0007669"/>
    <property type="project" value="UniProtKB-UniRule"/>
</dbReference>
<dbReference type="CDD" id="cd24010">
    <property type="entry name" value="ASKHA_NBD_AcK_PK"/>
    <property type="match status" value="1"/>
</dbReference>
<dbReference type="Gene3D" id="3.30.420.40">
    <property type="match status" value="2"/>
</dbReference>
<dbReference type="HAMAP" id="MF_00020">
    <property type="entry name" value="Acetate_kinase"/>
    <property type="match status" value="1"/>
</dbReference>
<dbReference type="InterPro" id="IPR004372">
    <property type="entry name" value="Ac/propionate_kinase"/>
</dbReference>
<dbReference type="InterPro" id="IPR000890">
    <property type="entry name" value="Aliphatic_acid_kin_short-chain"/>
</dbReference>
<dbReference type="InterPro" id="IPR023865">
    <property type="entry name" value="Aliphatic_acid_kinase_CS"/>
</dbReference>
<dbReference type="InterPro" id="IPR043129">
    <property type="entry name" value="ATPase_NBD"/>
</dbReference>
<dbReference type="NCBIfam" id="TIGR00016">
    <property type="entry name" value="ackA"/>
    <property type="match status" value="1"/>
</dbReference>
<dbReference type="PANTHER" id="PTHR21060">
    <property type="entry name" value="ACETATE KINASE"/>
    <property type="match status" value="1"/>
</dbReference>
<dbReference type="PANTHER" id="PTHR21060:SF15">
    <property type="entry name" value="ACETATE KINASE-RELATED"/>
    <property type="match status" value="1"/>
</dbReference>
<dbReference type="Pfam" id="PF00871">
    <property type="entry name" value="Acetate_kinase"/>
    <property type="match status" value="1"/>
</dbReference>
<dbReference type="PIRSF" id="PIRSF000722">
    <property type="entry name" value="Acetate_prop_kin"/>
    <property type="match status" value="1"/>
</dbReference>
<dbReference type="PRINTS" id="PR00471">
    <property type="entry name" value="ACETATEKNASE"/>
</dbReference>
<dbReference type="SUPFAM" id="SSF53067">
    <property type="entry name" value="Actin-like ATPase domain"/>
    <property type="match status" value="2"/>
</dbReference>
<dbReference type="PROSITE" id="PS01075">
    <property type="entry name" value="ACETATE_KINASE_1"/>
    <property type="match status" value="1"/>
</dbReference>
<dbReference type="PROSITE" id="PS01076">
    <property type="entry name" value="ACETATE_KINASE_2"/>
    <property type="match status" value="1"/>
</dbReference>
<accession>Q6AQT5</accession>
<name>ACKA_DESPS</name>
<reference key="1">
    <citation type="journal article" date="2004" name="Environ. Microbiol.">
        <title>The genome of Desulfotalea psychrophila, a sulfate-reducing bacterium from permanently cold Arctic sediments.</title>
        <authorList>
            <person name="Rabus R."/>
            <person name="Ruepp A."/>
            <person name="Frickey T."/>
            <person name="Rattei T."/>
            <person name="Fartmann B."/>
            <person name="Stark M."/>
            <person name="Bauer M."/>
            <person name="Zibat A."/>
            <person name="Lombardot T."/>
            <person name="Becker I."/>
            <person name="Amann J."/>
            <person name="Gellner K."/>
            <person name="Teeling H."/>
            <person name="Leuschner W.D."/>
            <person name="Gloeckner F.-O."/>
            <person name="Lupas A.N."/>
            <person name="Amann R."/>
            <person name="Klenk H.-P."/>
        </authorList>
    </citation>
    <scope>NUCLEOTIDE SEQUENCE [LARGE SCALE GENOMIC DNA]</scope>
    <source>
        <strain>DSM 12343 / LSv54</strain>
    </source>
</reference>
<comment type="function">
    <text evidence="1">Catalyzes the formation of acetyl phosphate from acetate and ATP. Can also catalyze the reverse reaction.</text>
</comment>
<comment type="catalytic activity">
    <reaction evidence="1">
        <text>acetate + ATP = acetyl phosphate + ADP</text>
        <dbReference type="Rhea" id="RHEA:11352"/>
        <dbReference type="ChEBI" id="CHEBI:22191"/>
        <dbReference type="ChEBI" id="CHEBI:30089"/>
        <dbReference type="ChEBI" id="CHEBI:30616"/>
        <dbReference type="ChEBI" id="CHEBI:456216"/>
        <dbReference type="EC" id="2.7.2.1"/>
    </reaction>
</comment>
<comment type="cofactor">
    <cofactor evidence="1">
        <name>Mg(2+)</name>
        <dbReference type="ChEBI" id="CHEBI:18420"/>
    </cofactor>
    <cofactor evidence="1">
        <name>Mn(2+)</name>
        <dbReference type="ChEBI" id="CHEBI:29035"/>
    </cofactor>
    <text evidence="1">Mg(2+). Can also accept Mn(2+).</text>
</comment>
<comment type="pathway">
    <text evidence="1">Metabolic intermediate biosynthesis; acetyl-CoA biosynthesis; acetyl-CoA from acetate: step 1/2.</text>
</comment>
<comment type="subunit">
    <text evidence="1">Homodimer.</text>
</comment>
<comment type="subcellular location">
    <subcellularLocation>
        <location evidence="1">Cytoplasm</location>
    </subcellularLocation>
</comment>
<comment type="similarity">
    <text evidence="1">Belongs to the acetokinase family.</text>
</comment>
<evidence type="ECO:0000255" key="1">
    <source>
        <dbReference type="HAMAP-Rule" id="MF_00020"/>
    </source>
</evidence>
<keyword id="KW-0067">ATP-binding</keyword>
<keyword id="KW-0963">Cytoplasm</keyword>
<keyword id="KW-0418">Kinase</keyword>
<keyword id="KW-0460">Magnesium</keyword>
<keyword id="KW-0479">Metal-binding</keyword>
<keyword id="KW-0547">Nucleotide-binding</keyword>
<keyword id="KW-1185">Reference proteome</keyword>
<keyword id="KW-0808">Transferase</keyword>